<gene>
    <name evidence="1" type="primary">SAMTOR</name>
    <name evidence="1" type="synonym">BMT2</name>
    <name type="ORF">RCJMB04_20b4</name>
</gene>
<evidence type="ECO:0000255" key="1">
    <source>
        <dbReference type="HAMAP-Rule" id="MF_03044"/>
    </source>
</evidence>
<evidence type="ECO:0000256" key="2">
    <source>
        <dbReference type="SAM" id="MobiDB-lite"/>
    </source>
</evidence>
<comment type="function">
    <text evidence="1">S-adenosyl-L-methionine-binding protein that acts as an inhibitor of mTORC1 signaling via interaction with the GATOR1 and KICSTOR complexes. Acts as a sensor of S-adenosyl-L-methionine to signal methionine sufficiency to mTORC1: in presence of methionine, binds S-adenosyl-L-methionine, leading to disrupt interaction with the GATOR1 and KICSTOR complexes and promote mTORC1 signaling. Upon methionine starvation, S-adenosyl-L-methionine levels are reduced, thereby promoting the association with GATOR1 and KICSTOR, leading to inhibit mTORC1 signaling. Probably also acts as a S-adenosyl-L-methionine-dependent methyltransferase.</text>
</comment>
<comment type="subunit">
    <text evidence="1">Interacts with the GATOR1 complex; interaction is disrupted when SAMTOR binds S-adenosyl-L-methionine. Interacts with the KICSTOR complex; interaction is disrupted when SAMTOR binds S-adenosyl-L-methionine.</text>
</comment>
<comment type="similarity">
    <text evidence="1">Belongs to the BMT2/SAMTOR family.</text>
</comment>
<reference key="1">
    <citation type="journal article" date="2005" name="Genome Biol.">
        <title>Full-length cDNAs from chicken bursal lymphocytes to facilitate gene function analysis.</title>
        <authorList>
            <person name="Caldwell R.B."/>
            <person name="Kierzek A.M."/>
            <person name="Arakawa H."/>
            <person name="Bezzubov Y."/>
            <person name="Zaim J."/>
            <person name="Fiedler P."/>
            <person name="Kutter S."/>
            <person name="Blagodatski A."/>
            <person name="Kostovska D."/>
            <person name="Koter M."/>
            <person name="Plachy J."/>
            <person name="Carninci P."/>
            <person name="Hayashizaki Y."/>
            <person name="Buerstedde J.-M."/>
        </authorList>
    </citation>
    <scope>NUCLEOTIDE SEQUENCE [LARGE SCALE MRNA]</scope>
    <source>
        <strain>CB</strain>
        <tissue>Bursa of Fabricius</tissue>
    </source>
</reference>
<name>SAMTR_CHICK</name>
<accession>Q5ZJ87</accession>
<keyword id="KW-0489">Methyltransferase</keyword>
<keyword id="KW-1185">Reference proteome</keyword>
<keyword id="KW-0949">S-adenosyl-L-methionine</keyword>
<keyword id="KW-0808">Transferase</keyword>
<sequence length="408" mass="46514">MEAAPRSRPRPGGAAASPPPPPPPPPPEQERKLEQEKLSGVVKSVHRRLRKKYREVGDFDKIWREHCEDEETLCEYAVAMKNLADNHWAKTCEGEGRIEWCCSVCREYFQNGGKRKALEKDEKRALLASKSTPALNASQPPKIEDPLPNFGLTNHEAITEELLHSLGKIRLLDVGSCFNPFLKFEEFLTVGIDIVPAVESVYKCDFLNLQIQQPLQLAQDAIDAFLKQLKNPIDSLPGELFHVVVFSLLLSYFPSPYQRWICCKKAHELLVLNGLLLVITPDSSHQNRRAMMMKSWKIAIESLGFKRFKYSKFSHMHLMAFRKTSLQTTSDLVSRNYPGMLYIPQDFNSIEDEEYSNTSCYIRSDMEDEQLAYGFMELPDAPYDSDSGESQSSSIPFYELEDPVLLLS</sequence>
<proteinExistence type="evidence at transcript level"/>
<protein>
    <recommendedName>
        <fullName evidence="1">S-adenosylmethionine sensor upstream of mTORC1</fullName>
    </recommendedName>
    <alternativeName>
        <fullName evidence="1">Probable methyltransferase BMT2 homolog</fullName>
        <ecNumber evidence="1">2.1.1.-</ecNumber>
    </alternativeName>
</protein>
<dbReference type="EC" id="2.1.1.-" evidence="1"/>
<dbReference type="EMBL" id="AJ720547">
    <property type="protein sequence ID" value="CAG32206.1"/>
    <property type="molecule type" value="mRNA"/>
</dbReference>
<dbReference type="RefSeq" id="NP_001025905.1">
    <property type="nucleotide sequence ID" value="NM_001030734.1"/>
</dbReference>
<dbReference type="SMR" id="Q5ZJ87"/>
<dbReference type="FunCoup" id="Q5ZJ87">
    <property type="interactions" value="1367"/>
</dbReference>
<dbReference type="STRING" id="9031.ENSGALP00000038109"/>
<dbReference type="PaxDb" id="9031-ENSGALP00000038109"/>
<dbReference type="Ensembl" id="ENSGALT00010003414.1">
    <property type="protein sequence ID" value="ENSGALP00010001857.1"/>
    <property type="gene ID" value="ENSGALG00010001475.1"/>
</dbReference>
<dbReference type="GeneID" id="417776"/>
<dbReference type="KEGG" id="gga:417776"/>
<dbReference type="CTD" id="475290"/>
<dbReference type="VEuPathDB" id="HostDB:geneid_417776"/>
<dbReference type="eggNOG" id="ENOG502QRK4">
    <property type="taxonomic scope" value="Eukaryota"/>
</dbReference>
<dbReference type="GeneTree" id="ENSGT00390000010382"/>
<dbReference type="InParanoid" id="Q5ZJ87"/>
<dbReference type="OMA" id="CCQKAYE"/>
<dbReference type="OrthoDB" id="5954793at2759"/>
<dbReference type="PhylomeDB" id="Q5ZJ87"/>
<dbReference type="Reactome" id="R-GGA-9639288">
    <property type="pathway name" value="Amino acids regulate mTORC1"/>
</dbReference>
<dbReference type="PRO" id="PR:Q5ZJ87"/>
<dbReference type="Proteomes" id="UP000000539">
    <property type="component" value="Chromosome 1"/>
</dbReference>
<dbReference type="Bgee" id="ENSGALG00000009440">
    <property type="expression patterns" value="Expressed in spermatid and 12 other cell types or tissues"/>
</dbReference>
<dbReference type="GO" id="GO:0008168">
    <property type="term" value="F:methyltransferase activity"/>
    <property type="evidence" value="ECO:0007669"/>
    <property type="project" value="UniProtKB-UniRule"/>
</dbReference>
<dbReference type="GO" id="GO:0044877">
    <property type="term" value="F:protein-containing complex binding"/>
    <property type="evidence" value="ECO:0007669"/>
    <property type="project" value="Ensembl"/>
</dbReference>
<dbReference type="GO" id="GO:1904047">
    <property type="term" value="F:S-adenosyl-L-methionine binding"/>
    <property type="evidence" value="ECO:0000250"/>
    <property type="project" value="UniProtKB"/>
</dbReference>
<dbReference type="GO" id="GO:0034198">
    <property type="term" value="P:cellular response to amino acid starvation"/>
    <property type="evidence" value="ECO:0000250"/>
    <property type="project" value="UniProtKB"/>
</dbReference>
<dbReference type="GO" id="GO:0061431">
    <property type="term" value="P:cellular response to methionine"/>
    <property type="evidence" value="ECO:0007669"/>
    <property type="project" value="Ensembl"/>
</dbReference>
<dbReference type="GO" id="GO:0032259">
    <property type="term" value="P:methylation"/>
    <property type="evidence" value="ECO:0007669"/>
    <property type="project" value="UniProtKB-KW"/>
</dbReference>
<dbReference type="GO" id="GO:1904262">
    <property type="term" value="P:negative regulation of TORC1 signaling"/>
    <property type="evidence" value="ECO:0000318"/>
    <property type="project" value="GO_Central"/>
</dbReference>
<dbReference type="GO" id="GO:1904263">
    <property type="term" value="P:positive regulation of TORC1 signaling"/>
    <property type="evidence" value="ECO:0007669"/>
    <property type="project" value="Ensembl"/>
</dbReference>
<dbReference type="GO" id="GO:1903432">
    <property type="term" value="P:regulation of TORC1 signaling"/>
    <property type="evidence" value="ECO:0000250"/>
    <property type="project" value="UniProtKB"/>
</dbReference>
<dbReference type="FunFam" id="3.40.50.150:FF:000089">
    <property type="entry name" value="S-adenosylmethionine sensor upstream of mTORC1"/>
    <property type="match status" value="1"/>
</dbReference>
<dbReference type="Gene3D" id="3.40.50.150">
    <property type="entry name" value="Vaccinia Virus protein VP39"/>
    <property type="match status" value="1"/>
</dbReference>
<dbReference type="HAMAP" id="MF_03044">
    <property type="entry name" value="BMT2"/>
    <property type="match status" value="1"/>
</dbReference>
<dbReference type="InterPro" id="IPR021867">
    <property type="entry name" value="Bmt2/SAMTOR"/>
</dbReference>
<dbReference type="InterPro" id="IPR029063">
    <property type="entry name" value="SAM-dependent_MTases_sf"/>
</dbReference>
<dbReference type="PANTHER" id="PTHR21008:SF0">
    <property type="entry name" value="S-ADENOSYLMETHIONINE SENSOR UPSTREAM OF MTORC1"/>
    <property type="match status" value="1"/>
</dbReference>
<dbReference type="PANTHER" id="PTHR21008">
    <property type="entry name" value="S-ADENOSYLMETHIONINE SENSOR UPSTREAM OF MTORC1-RELATED"/>
    <property type="match status" value="1"/>
</dbReference>
<dbReference type="Pfam" id="PF11968">
    <property type="entry name" value="Bmt2"/>
    <property type="match status" value="1"/>
</dbReference>
<dbReference type="SUPFAM" id="SSF101447">
    <property type="entry name" value="Formin homology 2 domain (FH2 domain)"/>
    <property type="match status" value="1"/>
</dbReference>
<dbReference type="SUPFAM" id="SSF53335">
    <property type="entry name" value="S-adenosyl-L-methionine-dependent methyltransferases"/>
    <property type="match status" value="1"/>
</dbReference>
<feature type="chain" id="PRO_0000321541" description="S-adenosylmethionine sensor upstream of mTORC1">
    <location>
        <begin position="1"/>
        <end position="408"/>
    </location>
</feature>
<feature type="region of interest" description="Disordered" evidence="2">
    <location>
        <begin position="1"/>
        <end position="37"/>
    </location>
</feature>
<feature type="compositionally biased region" description="Low complexity" evidence="2">
    <location>
        <begin position="1"/>
        <end position="16"/>
    </location>
</feature>
<feature type="compositionally biased region" description="Pro residues" evidence="2">
    <location>
        <begin position="17"/>
        <end position="27"/>
    </location>
</feature>
<feature type="compositionally biased region" description="Basic and acidic residues" evidence="2">
    <location>
        <begin position="28"/>
        <end position="37"/>
    </location>
</feature>
<feature type="binding site" evidence="1">
    <location>
        <position position="97"/>
    </location>
    <ligand>
        <name>S-adenosyl-L-methionine</name>
        <dbReference type="ChEBI" id="CHEBI:59789"/>
    </ligand>
</feature>
<feature type="binding site" evidence="1">
    <location>
        <position position="175"/>
    </location>
    <ligand>
        <name>S-adenosyl-L-methionine</name>
        <dbReference type="ChEBI" id="CHEBI:59789"/>
    </ligand>
</feature>
<feature type="binding site" evidence="1">
    <location>
        <position position="193"/>
    </location>
    <ligand>
        <name>S-adenosyl-L-methionine</name>
        <dbReference type="ChEBI" id="CHEBI:59789"/>
    </ligand>
</feature>
<feature type="binding site" evidence="1">
    <location>
        <position position="205"/>
    </location>
    <ligand>
        <name>S-adenosyl-L-methionine</name>
        <dbReference type="ChEBI" id="CHEBI:59789"/>
    </ligand>
</feature>
<feature type="binding site" evidence="1">
    <location>
        <position position="206"/>
    </location>
    <ligand>
        <name>S-adenosyl-L-methionine</name>
        <dbReference type="ChEBI" id="CHEBI:59789"/>
    </ligand>
</feature>
<feature type="binding site" evidence="1">
    <location>
        <position position="247"/>
    </location>
    <ligand>
        <name>S-adenosyl-L-methionine</name>
        <dbReference type="ChEBI" id="CHEBI:59789"/>
    </ligand>
</feature>
<organism>
    <name type="scientific">Gallus gallus</name>
    <name type="common">Chicken</name>
    <dbReference type="NCBI Taxonomy" id="9031"/>
    <lineage>
        <taxon>Eukaryota</taxon>
        <taxon>Metazoa</taxon>
        <taxon>Chordata</taxon>
        <taxon>Craniata</taxon>
        <taxon>Vertebrata</taxon>
        <taxon>Euteleostomi</taxon>
        <taxon>Archelosauria</taxon>
        <taxon>Archosauria</taxon>
        <taxon>Dinosauria</taxon>
        <taxon>Saurischia</taxon>
        <taxon>Theropoda</taxon>
        <taxon>Coelurosauria</taxon>
        <taxon>Aves</taxon>
        <taxon>Neognathae</taxon>
        <taxon>Galloanserae</taxon>
        <taxon>Galliformes</taxon>
        <taxon>Phasianidae</taxon>
        <taxon>Phasianinae</taxon>
        <taxon>Gallus</taxon>
    </lineage>
</organism>